<name>CAP3_ADES1</name>
<accession>A9CB89</accession>
<protein>
    <recommendedName>
        <fullName evidence="3">Pre-hexon-linking protein IIIa</fullName>
    </recommendedName>
    <alternativeName>
        <fullName evidence="3">Capsid vertex-specific component IIIa</fullName>
        <shortName evidence="3">CVSC</shortName>
    </alternativeName>
    <alternativeName>
        <fullName evidence="3">Protein IIIa</fullName>
    </alternativeName>
    <alternativeName>
        <fullName evidence="3">pIIIa</fullName>
    </alternativeName>
    <component>
        <recommendedName>
            <fullName evidence="3">Hexon-linking protein IIIa</fullName>
        </recommendedName>
    </component>
</protein>
<comment type="function">
    <text evidence="3">Structural component of the virion that acts as a cement protein on the capsid exterior which mediates the interactions between the hexons, including the peripentonal hexons, and reaches all the way to the penton vertices. Two hexon linking proteins IIIa, one from each facet, stabilize the unique edge interface between a pair of facets. As the virus enters the host cell, hexon linking proteins IIIa are shed concomitant with virion acidification in the endosome. During virus assembly, seems to play a role in the serotype specificity of the packaging of viral DNA via its interaction with packaging protein 3.</text>
</comment>
<comment type="subunit">
    <text evidence="2 3">Interacts with hexon proteins; this interaction tethers the peripentonal hexons to hexons situated in the facet. Interacts with the penton protein (via N-terminus). Interacts with packaging protein 3; this interaction is required to promote correct genome packaging.</text>
</comment>
<comment type="subcellular location">
    <subcellularLocation>
        <location evidence="3">Virion</location>
    </subcellularLocation>
    <subcellularLocation>
        <location evidence="3">Host nucleus</location>
    </subcellularLocation>
    <text evidence="3">Surrounds the border of each facet on the capsid exterior. Present in around 60 copies per virion.</text>
</comment>
<comment type="induction">
    <text evidence="3">Expressed in the late phase of the viral replicative cycle.</text>
</comment>
<comment type="PTM">
    <text evidence="1 3">Cleaved near the C-terminus by the viral protease during virion maturation to form the mature protein.</text>
</comment>
<comment type="miscellaneous">
    <text evidence="3">All late proteins expressed from the major late promoter are produced by alternative splicing and alternative polyadenylation of the same gene giving rise to non-overlapping ORFs. A leader sequence is present in the N-terminus of all these mRNAs and is recognized by the viral shutoff protein to provide expression although conventional translation via ribosome scanning from the cap has been shut off in the host cell.</text>
</comment>
<comment type="similarity">
    <text evidence="3 5">Belongs to the adenoviridae hexon-linking protein IIIa family.</text>
</comment>
<gene>
    <name type="ORF">L1</name>
</gene>
<feature type="chain" id="PRO_0000425926" description="Pre-hexon-linking protein IIIa" evidence="3">
    <location>
        <begin position="1"/>
        <end position="615"/>
    </location>
</feature>
<feature type="chain" id="PRO_0000439414" description="Hexon-linking protein IIIa" evidence="3">
    <location>
        <begin position="1"/>
        <end position="601"/>
    </location>
</feature>
<feature type="propeptide" id="PRO_0000439415" evidence="3">
    <location>
        <begin position="602"/>
        <end position="615"/>
    </location>
</feature>
<feature type="region of interest" description="Peripentonal hexon-tethering domain" evidence="3">
    <location>
        <begin position="1"/>
        <end position="92"/>
    </location>
</feature>
<feature type="region of interest" description="Binding to hexon-linking protein" evidence="3">
    <location>
        <begin position="124"/>
        <end position="238"/>
    </location>
</feature>
<feature type="region of interest" description="Disordered" evidence="4">
    <location>
        <begin position="400"/>
        <end position="473"/>
    </location>
</feature>
<feature type="region of interest" description="Disordered" evidence="4">
    <location>
        <begin position="528"/>
        <end position="615"/>
    </location>
</feature>
<feature type="compositionally biased region" description="Basic and acidic residues" evidence="4">
    <location>
        <begin position="400"/>
        <end position="409"/>
    </location>
</feature>
<feature type="compositionally biased region" description="Low complexity" evidence="4">
    <location>
        <begin position="419"/>
        <end position="430"/>
    </location>
</feature>
<feature type="compositionally biased region" description="Low complexity" evidence="4">
    <location>
        <begin position="451"/>
        <end position="460"/>
    </location>
</feature>
<feature type="compositionally biased region" description="Basic and acidic residues" evidence="4">
    <location>
        <begin position="539"/>
        <end position="548"/>
    </location>
</feature>
<feature type="compositionally biased region" description="Low complexity" evidence="4">
    <location>
        <begin position="557"/>
        <end position="570"/>
    </location>
</feature>
<feature type="site" description="Cleavage; by viral protease" evidence="3">
    <location>
        <begin position="601"/>
        <end position="602"/>
    </location>
</feature>
<feature type="modified residue" description="Phosphoserine; by host" evidence="3">
    <location>
        <position position="212"/>
    </location>
</feature>
<feature type="modified residue" description="Phosphothreonine; by host" evidence="3">
    <location>
        <position position="262"/>
    </location>
</feature>
<feature type="modified residue" description="Phosphoserine; by host" evidence="3">
    <location>
        <position position="451"/>
    </location>
</feature>
<dbReference type="EMBL" id="DQ106414">
    <property type="protein sequence ID" value="ABA47239.1"/>
    <property type="molecule type" value="Genomic_DNA"/>
</dbReference>
<dbReference type="RefSeq" id="YP_001552250.1">
    <property type="nucleotide sequence ID" value="NC_009989.1"/>
</dbReference>
<dbReference type="SMR" id="A9CB89"/>
<dbReference type="KEGG" id="vg:10973892"/>
<dbReference type="OrthoDB" id="1411at10239"/>
<dbReference type="Proteomes" id="UP000136605">
    <property type="component" value="Genome"/>
</dbReference>
<dbReference type="GO" id="GO:0042025">
    <property type="term" value="C:host cell nucleus"/>
    <property type="evidence" value="ECO:0007669"/>
    <property type="project" value="UniProtKB-SubCell"/>
</dbReference>
<dbReference type="GO" id="GO:0098021">
    <property type="term" value="C:viral capsid, decoration"/>
    <property type="evidence" value="ECO:0007669"/>
    <property type="project" value="UniProtKB-UniRule"/>
</dbReference>
<dbReference type="Gene3D" id="1.20.120.1500">
    <property type="entry name" value="Pre-hexon-linking protein IIIa"/>
    <property type="match status" value="1"/>
</dbReference>
<dbReference type="HAMAP" id="MF_04047">
    <property type="entry name" value="ADV_CAP3"/>
    <property type="match status" value="1"/>
</dbReference>
<dbReference type="InterPro" id="IPR003479">
    <property type="entry name" value="Hex_IIIa"/>
</dbReference>
<dbReference type="InterPro" id="IPR043053">
    <property type="entry name" value="Hex_IIIa_N"/>
</dbReference>
<dbReference type="Pfam" id="PF02455">
    <property type="entry name" value="Hex_IIIa"/>
    <property type="match status" value="1"/>
</dbReference>
<organism>
    <name type="scientific">Snake adenovirus serotype 1</name>
    <name type="common">SnAdV-1</name>
    <dbReference type="NCBI Taxonomy" id="189830"/>
    <lineage>
        <taxon>Viruses</taxon>
        <taxon>Varidnaviria</taxon>
        <taxon>Bamfordvirae</taxon>
        <taxon>Preplasmiviricota</taxon>
        <taxon>Tectiliviricetes</taxon>
        <taxon>Rowavirales</taxon>
        <taxon>Adenoviridae</taxon>
        <taxon>Atadenovirus</taxon>
        <taxon>Snake atadenovirus A</taxon>
    </lineage>
</organism>
<organismHost>
    <name type="scientific">Pantherophis guttatus</name>
    <name type="common">Corn snake</name>
    <name type="synonym">Elaphe guttata</name>
    <dbReference type="NCBI Taxonomy" id="94885"/>
</organismHost>
<reference key="1">
    <citation type="journal article" date="2002" name="J. Gen. Virol.">
        <title>Genetic analysis of an adenovirus isolated from corn snake (Elaphe guttata) implies common origin with the members of the proposed new genus Atadenovirus.</title>
        <authorList>
            <person name="Farkas S.L."/>
            <person name="Benko M."/>
            <person name="Elo P.T."/>
            <person name="Ursu K."/>
            <person name="Dan A."/>
            <person name="Ahne W."/>
            <person name="Harrach B."/>
        </authorList>
    </citation>
    <scope>NUCLEOTIDE SEQUENCE [GENOMIC DNA]</scope>
</reference>
<evidence type="ECO:0000250" key="1">
    <source>
        <dbReference type="UniProtKB" id="P03279"/>
    </source>
</evidence>
<evidence type="ECO:0000250" key="2">
    <source>
        <dbReference type="UniProtKB" id="P12537"/>
    </source>
</evidence>
<evidence type="ECO:0000255" key="3">
    <source>
        <dbReference type="HAMAP-Rule" id="MF_04047"/>
    </source>
</evidence>
<evidence type="ECO:0000256" key="4">
    <source>
        <dbReference type="SAM" id="MobiDB-lite"/>
    </source>
</evidence>
<evidence type="ECO:0000305" key="5"/>
<keyword id="KW-1232">Capsid decoration protein</keyword>
<keyword id="KW-0167">Capsid protein</keyword>
<keyword id="KW-1048">Host nucleus</keyword>
<keyword id="KW-0426">Late protein</keyword>
<keyword id="KW-0597">Phosphoprotein</keyword>
<keyword id="KW-1185">Reference proteome</keyword>
<keyword id="KW-0231">Viral genome packaging</keyword>
<keyword id="KW-1188">Viral release from host cell</keyword>
<keyword id="KW-0946">Virion</keyword>
<proteinExistence type="inferred from homology"/>
<sequence length="615" mass="67718">MDPGLKPSSSWTHKIVDSIIANRSQTAVQNFRRQPLANKLTALEDAIVQPRKDSTPDSIAAILQELVSMGALKPSEVGPMFSDLLIRVHKYNSTNVQSNLNVLLGDIRAAQSEAIRSTNVGELSNQVILNDFLSRLPPVVPMGQHNYEAFKQSLRLMVNEAPNVTLFKSGPDTMMQVNIRGVNTVNLNSAFSNLQNLWGVVLDSDRVPGSISSKLSSNTRVLLLFLAPFTNENTFTPDTFLWQIMQLYRETVAASIEAPLETEREVAETVRDMGGDIDDVGRTMAYLLKNKEEVMANPRTLSPRQLGVVRYVQESLMDRIDRNGEEPIDALRNIVFSFAPSYFEANGSFIRKLLSYLEVALRNSPNYFREIYSNKYWTPPPSFWTQNYGDFFVEREAEAEREALEEAGPRESYSFLEDPSSSPQSSKIQSLGTCGMTMLRPMSPSVPPTPSVRSAPPSVSYGGPSRSSLSVDSASNRNFGATLARAVLPSAAAAIGNAAGEALYPSLGQFLAPAASLAATRFLSGNRGERIKRQRQRRRAEIERRRIAELTPPSPAPSLSSESSAPSLSSVRTSYTPLAGAKYWNPVDDPEGDRDVSGTGLGNPFDYLRPRNGLK</sequence>